<gene>
    <name evidence="1" type="primary">rpmI</name>
    <name type="ordered locus">BC_4574</name>
</gene>
<evidence type="ECO:0000255" key="1">
    <source>
        <dbReference type="HAMAP-Rule" id="MF_00514"/>
    </source>
</evidence>
<evidence type="ECO:0000256" key="2">
    <source>
        <dbReference type="SAM" id="MobiDB-lite"/>
    </source>
</evidence>
<evidence type="ECO:0000305" key="3"/>
<organism>
    <name type="scientific">Bacillus cereus (strain ATCC 14579 / DSM 31 / CCUG 7414 / JCM 2152 / NBRC 15305 / NCIMB 9373 / NCTC 2599 / NRRL B-3711)</name>
    <dbReference type="NCBI Taxonomy" id="226900"/>
    <lineage>
        <taxon>Bacteria</taxon>
        <taxon>Bacillati</taxon>
        <taxon>Bacillota</taxon>
        <taxon>Bacilli</taxon>
        <taxon>Bacillales</taxon>
        <taxon>Bacillaceae</taxon>
        <taxon>Bacillus</taxon>
        <taxon>Bacillus cereus group</taxon>
    </lineage>
</organism>
<accession>Q817H6</accession>
<protein>
    <recommendedName>
        <fullName evidence="1">Large ribosomal subunit protein bL35</fullName>
    </recommendedName>
    <alternativeName>
        <fullName evidence="3">50S ribosomal protein L35</fullName>
    </alternativeName>
</protein>
<comment type="similarity">
    <text evidence="1">Belongs to the bacterial ribosomal protein bL35 family.</text>
</comment>
<reference key="1">
    <citation type="journal article" date="2003" name="Nature">
        <title>Genome sequence of Bacillus cereus and comparative analysis with Bacillus anthracis.</title>
        <authorList>
            <person name="Ivanova N."/>
            <person name="Sorokin A."/>
            <person name="Anderson I."/>
            <person name="Galleron N."/>
            <person name="Candelon B."/>
            <person name="Kapatral V."/>
            <person name="Bhattacharyya A."/>
            <person name="Reznik G."/>
            <person name="Mikhailova N."/>
            <person name="Lapidus A."/>
            <person name="Chu L."/>
            <person name="Mazur M."/>
            <person name="Goltsman E."/>
            <person name="Larsen N."/>
            <person name="D'Souza M."/>
            <person name="Walunas T."/>
            <person name="Grechkin Y."/>
            <person name="Pusch G."/>
            <person name="Haselkorn R."/>
            <person name="Fonstein M."/>
            <person name="Ehrlich S.D."/>
            <person name="Overbeek R."/>
            <person name="Kyrpides N.C."/>
        </authorList>
    </citation>
    <scope>NUCLEOTIDE SEQUENCE [LARGE SCALE GENOMIC DNA]</scope>
    <source>
        <strain>ATCC 14579 / DSM 31 / CCUG 7414 / JCM 2152 / NBRC 15305 / NCIMB 9373 / NCTC 2599 / NRRL B-3711</strain>
    </source>
</reference>
<feature type="chain" id="PRO_0000177322" description="Large ribosomal subunit protein bL35">
    <location>
        <begin position="1"/>
        <end position="66"/>
    </location>
</feature>
<feature type="region of interest" description="Disordered" evidence="2">
    <location>
        <begin position="1"/>
        <end position="26"/>
    </location>
</feature>
<sequence length="66" mass="7496">MPKQKTHRGAAKRFKKTGSGKLKRSHAYTSHLFANKSTKAKRKLRKAGVVSAGDFKRIRQMLDNLK</sequence>
<name>RL35_BACCR</name>
<keyword id="KW-1185">Reference proteome</keyword>
<keyword id="KW-0687">Ribonucleoprotein</keyword>
<keyword id="KW-0689">Ribosomal protein</keyword>
<dbReference type="EMBL" id="AE016877">
    <property type="protein sequence ID" value="AAP11481.1"/>
    <property type="molecule type" value="Genomic_DNA"/>
</dbReference>
<dbReference type="RefSeq" id="NP_834280.1">
    <property type="nucleotide sequence ID" value="NC_004722.1"/>
</dbReference>
<dbReference type="RefSeq" id="WP_001125945.1">
    <property type="nucleotide sequence ID" value="NZ_CP138336.1"/>
</dbReference>
<dbReference type="SMR" id="Q817H6"/>
<dbReference type="STRING" id="226900.BC_4574"/>
<dbReference type="GeneID" id="93006536"/>
<dbReference type="KEGG" id="bce:BC4574"/>
<dbReference type="PATRIC" id="fig|226900.8.peg.4734"/>
<dbReference type="HOGENOM" id="CLU_169643_3_0_9"/>
<dbReference type="OrthoDB" id="47476at2"/>
<dbReference type="PRO" id="PR:Q817H6"/>
<dbReference type="Proteomes" id="UP000001417">
    <property type="component" value="Chromosome"/>
</dbReference>
<dbReference type="GO" id="GO:0022625">
    <property type="term" value="C:cytosolic large ribosomal subunit"/>
    <property type="evidence" value="ECO:0000318"/>
    <property type="project" value="GO_Central"/>
</dbReference>
<dbReference type="GO" id="GO:0003735">
    <property type="term" value="F:structural constituent of ribosome"/>
    <property type="evidence" value="ECO:0000318"/>
    <property type="project" value="GO_Central"/>
</dbReference>
<dbReference type="GO" id="GO:0006412">
    <property type="term" value="P:translation"/>
    <property type="evidence" value="ECO:0007669"/>
    <property type="project" value="UniProtKB-UniRule"/>
</dbReference>
<dbReference type="FunFam" id="4.10.410.60:FF:000001">
    <property type="entry name" value="50S ribosomal protein L35"/>
    <property type="match status" value="1"/>
</dbReference>
<dbReference type="Gene3D" id="4.10.410.60">
    <property type="match status" value="1"/>
</dbReference>
<dbReference type="HAMAP" id="MF_00514">
    <property type="entry name" value="Ribosomal_bL35"/>
    <property type="match status" value="1"/>
</dbReference>
<dbReference type="InterPro" id="IPR001706">
    <property type="entry name" value="Ribosomal_bL35"/>
</dbReference>
<dbReference type="InterPro" id="IPR021137">
    <property type="entry name" value="Ribosomal_bL35-like"/>
</dbReference>
<dbReference type="InterPro" id="IPR018265">
    <property type="entry name" value="Ribosomal_bL35_CS"/>
</dbReference>
<dbReference type="InterPro" id="IPR037229">
    <property type="entry name" value="Ribosomal_bL35_sf"/>
</dbReference>
<dbReference type="NCBIfam" id="TIGR00001">
    <property type="entry name" value="rpmI_bact"/>
    <property type="match status" value="1"/>
</dbReference>
<dbReference type="PANTHER" id="PTHR33343">
    <property type="entry name" value="54S RIBOSOMAL PROTEIN BL35M"/>
    <property type="match status" value="1"/>
</dbReference>
<dbReference type="PANTHER" id="PTHR33343:SF1">
    <property type="entry name" value="LARGE RIBOSOMAL SUBUNIT PROTEIN BL35M"/>
    <property type="match status" value="1"/>
</dbReference>
<dbReference type="Pfam" id="PF01632">
    <property type="entry name" value="Ribosomal_L35p"/>
    <property type="match status" value="1"/>
</dbReference>
<dbReference type="PRINTS" id="PR00064">
    <property type="entry name" value="RIBOSOMALL35"/>
</dbReference>
<dbReference type="SUPFAM" id="SSF143034">
    <property type="entry name" value="L35p-like"/>
    <property type="match status" value="1"/>
</dbReference>
<dbReference type="PROSITE" id="PS00936">
    <property type="entry name" value="RIBOSOMAL_L35"/>
    <property type="match status" value="1"/>
</dbReference>
<proteinExistence type="inferred from homology"/>